<dbReference type="EMBL" id="CU329671">
    <property type="protein sequence ID" value="CAA21094.1"/>
    <property type="molecule type" value="Genomic_DNA"/>
</dbReference>
<dbReference type="PIR" id="T40014">
    <property type="entry name" value="T40014"/>
</dbReference>
<dbReference type="RefSeq" id="NP_596643.1">
    <property type="nucleotide sequence ID" value="NM_001022565.2"/>
</dbReference>
<dbReference type="SMR" id="O74786"/>
<dbReference type="BioGRID" id="277149">
    <property type="interactions" value="2"/>
</dbReference>
<dbReference type="FunCoup" id="O74786">
    <property type="interactions" value="30"/>
</dbReference>
<dbReference type="STRING" id="284812.O74786"/>
<dbReference type="iPTMnet" id="O74786"/>
<dbReference type="PaxDb" id="4896-SPBC26H8.02c.1"/>
<dbReference type="EnsemblFungi" id="SPBC26H8.02c.1">
    <property type="protein sequence ID" value="SPBC26H8.02c.1:pep"/>
    <property type="gene ID" value="SPBC26H8.02c"/>
</dbReference>
<dbReference type="GeneID" id="2540623"/>
<dbReference type="KEGG" id="spo:2540623"/>
<dbReference type="PomBase" id="SPBC26H8.02c">
    <property type="gene designation" value="sec9"/>
</dbReference>
<dbReference type="VEuPathDB" id="FungiDB:SPBC26H8.02c"/>
<dbReference type="eggNOG" id="KOG3065">
    <property type="taxonomic scope" value="Eukaryota"/>
</dbReference>
<dbReference type="HOGENOM" id="CLU_020823_2_0_1"/>
<dbReference type="InParanoid" id="O74786"/>
<dbReference type="OMA" id="NDPYARK"/>
<dbReference type="PhylomeDB" id="O74786"/>
<dbReference type="Reactome" id="R-SPO-6798695">
    <property type="pathway name" value="Neutrophil degranulation"/>
</dbReference>
<dbReference type="Reactome" id="R-SPO-8980692">
    <property type="pathway name" value="RHOA GTPase cycle"/>
</dbReference>
<dbReference type="Reactome" id="R-SPO-9013026">
    <property type="pathway name" value="RHOB GTPase cycle"/>
</dbReference>
<dbReference type="Reactome" id="R-SPO-9013406">
    <property type="pathway name" value="RHOQ GTPase cycle"/>
</dbReference>
<dbReference type="PRO" id="PR:O74786"/>
<dbReference type="Proteomes" id="UP000002485">
    <property type="component" value="Chromosome II"/>
</dbReference>
<dbReference type="GO" id="GO:0005886">
    <property type="term" value="C:plasma membrane"/>
    <property type="evidence" value="ECO:0000318"/>
    <property type="project" value="GO_Central"/>
</dbReference>
<dbReference type="GO" id="GO:0005628">
    <property type="term" value="C:prospore membrane"/>
    <property type="evidence" value="ECO:0000314"/>
    <property type="project" value="PomBase"/>
</dbReference>
<dbReference type="GO" id="GO:0031201">
    <property type="term" value="C:SNARE complex"/>
    <property type="evidence" value="ECO:0000318"/>
    <property type="project" value="GO_Central"/>
</dbReference>
<dbReference type="GO" id="GO:0005484">
    <property type="term" value="F:SNAP receptor activity"/>
    <property type="evidence" value="ECO:0000318"/>
    <property type="project" value="GO_Central"/>
</dbReference>
<dbReference type="GO" id="GO:0019905">
    <property type="term" value="F:syntaxin binding"/>
    <property type="evidence" value="ECO:0000318"/>
    <property type="project" value="GO_Central"/>
</dbReference>
<dbReference type="GO" id="GO:0032120">
    <property type="term" value="P:ascospore-type prospore membrane formation"/>
    <property type="evidence" value="ECO:0000315"/>
    <property type="project" value="PomBase"/>
</dbReference>
<dbReference type="GO" id="GO:0006887">
    <property type="term" value="P:exocytosis"/>
    <property type="evidence" value="ECO:0000318"/>
    <property type="project" value="GO_Central"/>
</dbReference>
<dbReference type="GO" id="GO:0006893">
    <property type="term" value="P:Golgi to plasma membrane transport"/>
    <property type="evidence" value="ECO:0000266"/>
    <property type="project" value="PomBase"/>
</dbReference>
<dbReference type="GO" id="GO:0006886">
    <property type="term" value="P:intracellular protein transport"/>
    <property type="evidence" value="ECO:0000303"/>
    <property type="project" value="PomBase"/>
</dbReference>
<dbReference type="GO" id="GO:0006906">
    <property type="term" value="P:vesicle fusion"/>
    <property type="evidence" value="ECO:0000318"/>
    <property type="project" value="GO_Central"/>
</dbReference>
<dbReference type="CDD" id="cd15857">
    <property type="entry name" value="SNARE_SEC9C"/>
    <property type="match status" value="1"/>
</dbReference>
<dbReference type="CDD" id="cd15886">
    <property type="entry name" value="SNARE_SEC9N"/>
    <property type="match status" value="1"/>
</dbReference>
<dbReference type="FunFam" id="1.20.5.110:FF:000043">
    <property type="entry name" value="Protein transport protein sec9"/>
    <property type="match status" value="1"/>
</dbReference>
<dbReference type="Gene3D" id="1.20.5.110">
    <property type="match status" value="2"/>
</dbReference>
<dbReference type="InterPro" id="IPR000727">
    <property type="entry name" value="T_SNARE_dom"/>
</dbReference>
<dbReference type="PANTHER" id="PTHR19305">
    <property type="entry name" value="SYNAPTOSOMAL ASSOCIATED PROTEIN"/>
    <property type="match status" value="1"/>
</dbReference>
<dbReference type="PANTHER" id="PTHR19305:SF9">
    <property type="entry name" value="SYNAPTOSOMAL-ASSOCIATED PROTEIN 29"/>
    <property type="match status" value="1"/>
</dbReference>
<dbReference type="SMART" id="SM00397">
    <property type="entry name" value="t_SNARE"/>
    <property type="match status" value="2"/>
</dbReference>
<dbReference type="SUPFAM" id="SSF58038">
    <property type="entry name" value="SNARE fusion complex"/>
    <property type="match status" value="2"/>
</dbReference>
<dbReference type="PROSITE" id="PS50192">
    <property type="entry name" value="T_SNARE"/>
    <property type="match status" value="1"/>
</dbReference>
<keyword id="KW-0175">Coiled coil</keyword>
<keyword id="KW-0597">Phosphoprotein</keyword>
<keyword id="KW-0653">Protein transport</keyword>
<keyword id="KW-1185">Reference proteome</keyword>
<keyword id="KW-0677">Repeat</keyword>
<keyword id="KW-0813">Transport</keyword>
<evidence type="ECO:0000255" key="1">
    <source>
        <dbReference type="PROSITE-ProRule" id="PRU00202"/>
    </source>
</evidence>
<evidence type="ECO:0000256" key="2">
    <source>
        <dbReference type="SAM" id="MobiDB-lite"/>
    </source>
</evidence>
<evidence type="ECO:0000269" key="3">
    <source>
    </source>
</evidence>
<evidence type="ECO:0000269" key="4">
    <source>
    </source>
</evidence>
<evidence type="ECO:0000305" key="5"/>
<accession>O74786</accession>
<comment type="function">
    <text evidence="3">Has a role in cell separation, a final step of cytokinesis and in the assembly of the forespore membrane. May have a role in the transport of secretory proteins to these growing sites.</text>
</comment>
<comment type="similarity">
    <text evidence="5">Belongs to the SNAP-25 family.</text>
</comment>
<sequence>MKKLFKKKKGVSPHMYMLPEESNSNTATNAPSYSVGGTTANSYSSNSYNDNNNSNSTYGSSNNYGNYGSSNNYGSYGASNTYGSNGSSNNYGNYGATNSNGDAGYSITPIRNDPYARKDMPPMKSSAAVTERPSMHRSAPSQDTLDLKKQELFAGARIQNDDESTTDTIPHNDDGTEGDEYGEGYRDGYEEDQEVEAIKQKIQFVKQDSLSSTRNALLMAGNAEQMGLATLANLGEQTEKIATAEKELDISKIHAKRAEEQARELKTLNRSMFAIHVPKPWGKAKRVAAEEARLAAKRDAERQDEMLNRQFAYRSQKRIDQAMKDNMKSNKKKGDSKGVSILERSHYQFEPDAEDDAMEKEIDGNLDQIGALATRLKGLAYATGQEIDSQNARLGSIHDKSDRLDTDVYLNVERLRHIH</sequence>
<name>SEC9_SCHPO</name>
<feature type="chain" id="PRO_0000213611" description="Protein transport protein sec9">
    <location>
        <begin position="1"/>
        <end position="419"/>
    </location>
</feature>
<feature type="domain" description="t-SNARE coiled-coil homology 1" evidence="1">
    <location>
        <begin position="203"/>
        <end position="265"/>
    </location>
</feature>
<feature type="domain" description="t-SNARE coiled-coil homology 2" evidence="1">
    <location>
        <begin position="356"/>
        <end position="418"/>
    </location>
</feature>
<feature type="region of interest" description="Disordered" evidence="2">
    <location>
        <begin position="1"/>
        <end position="60"/>
    </location>
</feature>
<feature type="region of interest" description="Disordered" evidence="2">
    <location>
        <begin position="116"/>
        <end position="143"/>
    </location>
</feature>
<feature type="region of interest" description="Disordered" evidence="2">
    <location>
        <begin position="156"/>
        <end position="186"/>
    </location>
</feature>
<feature type="compositionally biased region" description="Basic residues" evidence="2">
    <location>
        <begin position="1"/>
        <end position="11"/>
    </location>
</feature>
<feature type="compositionally biased region" description="Polar residues" evidence="2">
    <location>
        <begin position="21"/>
        <end position="32"/>
    </location>
</feature>
<feature type="compositionally biased region" description="Low complexity" evidence="2">
    <location>
        <begin position="36"/>
        <end position="60"/>
    </location>
</feature>
<feature type="modified residue" description="Phosphoserine" evidence="4">
    <location>
        <position position="141"/>
    </location>
</feature>
<feature type="mutagenesis site" description="In sec9-10; temperature-sensitive." evidence="3">
    <original>L</original>
    <variation>P</variation>
    <location>
        <position position="228"/>
    </location>
</feature>
<protein>
    <recommendedName>
        <fullName>Protein transport protein sec9</fullName>
    </recommendedName>
</protein>
<proteinExistence type="evidence at protein level"/>
<gene>
    <name type="primary">sec9</name>
    <name type="ORF">SPBC26H8.02c</name>
</gene>
<organism>
    <name type="scientific">Schizosaccharomyces pombe (strain 972 / ATCC 24843)</name>
    <name type="common">Fission yeast</name>
    <dbReference type="NCBI Taxonomy" id="284812"/>
    <lineage>
        <taxon>Eukaryota</taxon>
        <taxon>Fungi</taxon>
        <taxon>Dikarya</taxon>
        <taxon>Ascomycota</taxon>
        <taxon>Taphrinomycotina</taxon>
        <taxon>Schizosaccharomycetes</taxon>
        <taxon>Schizosaccharomycetales</taxon>
        <taxon>Schizosaccharomycetaceae</taxon>
        <taxon>Schizosaccharomyces</taxon>
    </lineage>
</organism>
<reference key="1">
    <citation type="journal article" date="2002" name="Nature">
        <title>The genome sequence of Schizosaccharomyces pombe.</title>
        <authorList>
            <person name="Wood V."/>
            <person name="Gwilliam R."/>
            <person name="Rajandream M.A."/>
            <person name="Lyne M.H."/>
            <person name="Lyne R."/>
            <person name="Stewart A."/>
            <person name="Sgouros J.G."/>
            <person name="Peat N."/>
            <person name="Hayles J."/>
            <person name="Baker S.G."/>
            <person name="Basham D."/>
            <person name="Bowman S."/>
            <person name="Brooks K."/>
            <person name="Brown D."/>
            <person name="Brown S."/>
            <person name="Chillingworth T."/>
            <person name="Churcher C.M."/>
            <person name="Collins M."/>
            <person name="Connor R."/>
            <person name="Cronin A."/>
            <person name="Davis P."/>
            <person name="Feltwell T."/>
            <person name="Fraser A."/>
            <person name="Gentles S."/>
            <person name="Goble A."/>
            <person name="Hamlin N."/>
            <person name="Harris D.E."/>
            <person name="Hidalgo J."/>
            <person name="Hodgson G."/>
            <person name="Holroyd S."/>
            <person name="Hornsby T."/>
            <person name="Howarth S."/>
            <person name="Huckle E.J."/>
            <person name="Hunt S."/>
            <person name="Jagels K."/>
            <person name="James K.D."/>
            <person name="Jones L."/>
            <person name="Jones M."/>
            <person name="Leather S."/>
            <person name="McDonald S."/>
            <person name="McLean J."/>
            <person name="Mooney P."/>
            <person name="Moule S."/>
            <person name="Mungall K.L."/>
            <person name="Murphy L.D."/>
            <person name="Niblett D."/>
            <person name="Odell C."/>
            <person name="Oliver K."/>
            <person name="O'Neil S."/>
            <person name="Pearson D."/>
            <person name="Quail M.A."/>
            <person name="Rabbinowitsch E."/>
            <person name="Rutherford K.M."/>
            <person name="Rutter S."/>
            <person name="Saunders D."/>
            <person name="Seeger K."/>
            <person name="Sharp S."/>
            <person name="Skelton J."/>
            <person name="Simmonds M.N."/>
            <person name="Squares R."/>
            <person name="Squares S."/>
            <person name="Stevens K."/>
            <person name="Taylor K."/>
            <person name="Taylor R.G."/>
            <person name="Tivey A."/>
            <person name="Walsh S.V."/>
            <person name="Warren T."/>
            <person name="Whitehead S."/>
            <person name="Woodward J.R."/>
            <person name="Volckaert G."/>
            <person name="Aert R."/>
            <person name="Robben J."/>
            <person name="Grymonprez B."/>
            <person name="Weltjens I."/>
            <person name="Vanstreels E."/>
            <person name="Rieger M."/>
            <person name="Schaefer M."/>
            <person name="Mueller-Auer S."/>
            <person name="Gabel C."/>
            <person name="Fuchs M."/>
            <person name="Duesterhoeft A."/>
            <person name="Fritzc C."/>
            <person name="Holzer E."/>
            <person name="Moestl D."/>
            <person name="Hilbert H."/>
            <person name="Borzym K."/>
            <person name="Langer I."/>
            <person name="Beck A."/>
            <person name="Lehrach H."/>
            <person name="Reinhardt R."/>
            <person name="Pohl T.M."/>
            <person name="Eger P."/>
            <person name="Zimmermann W."/>
            <person name="Wedler H."/>
            <person name="Wambutt R."/>
            <person name="Purnelle B."/>
            <person name="Goffeau A."/>
            <person name="Cadieu E."/>
            <person name="Dreano S."/>
            <person name="Gloux S."/>
            <person name="Lelaure V."/>
            <person name="Mottier S."/>
            <person name="Galibert F."/>
            <person name="Aves S.J."/>
            <person name="Xiang Z."/>
            <person name="Hunt C."/>
            <person name="Moore K."/>
            <person name="Hurst S.M."/>
            <person name="Lucas M."/>
            <person name="Rochet M."/>
            <person name="Gaillardin C."/>
            <person name="Tallada V.A."/>
            <person name="Garzon A."/>
            <person name="Thode G."/>
            <person name="Daga R.R."/>
            <person name="Cruzado L."/>
            <person name="Jimenez J."/>
            <person name="Sanchez M."/>
            <person name="del Rey F."/>
            <person name="Benito J."/>
            <person name="Dominguez A."/>
            <person name="Revuelta J.L."/>
            <person name="Moreno S."/>
            <person name="Armstrong J."/>
            <person name="Forsburg S.L."/>
            <person name="Cerutti L."/>
            <person name="Lowe T."/>
            <person name="McCombie W.R."/>
            <person name="Paulsen I."/>
            <person name="Potashkin J."/>
            <person name="Shpakovski G.V."/>
            <person name="Ussery D."/>
            <person name="Barrell B.G."/>
            <person name="Nurse P."/>
        </authorList>
    </citation>
    <scope>NUCLEOTIDE SEQUENCE [LARGE SCALE GENOMIC DNA]</scope>
    <source>
        <strain>972 / ATCC 24843</strain>
    </source>
</reference>
<reference key="2">
    <citation type="journal article" date="2005" name="Cell Struct. Funct.">
        <title>A fission yeast SNAP-25 homologue, SpSec9, is essential for cytokinesis and sporulation.</title>
        <authorList>
            <person name="Nakamura T."/>
            <person name="Kashiwazaki J."/>
            <person name="Shimoda C."/>
        </authorList>
    </citation>
    <scope>FUNCTION</scope>
    <scope>MUTAGENESIS OF LEU-228</scope>
</reference>
<reference key="3">
    <citation type="journal article" date="2008" name="J. Proteome Res.">
        <title>Phosphoproteome analysis of fission yeast.</title>
        <authorList>
            <person name="Wilson-Grady J.T."/>
            <person name="Villen J."/>
            <person name="Gygi S.P."/>
        </authorList>
    </citation>
    <scope>PHOSPHORYLATION [LARGE SCALE ANALYSIS] AT SER-141</scope>
    <scope>IDENTIFICATION BY MASS SPECTROMETRY</scope>
</reference>